<reference key="1">
    <citation type="journal article" date="2000" name="Nature">
        <title>Genome sequence of the endocellular bacterial symbiont of aphids Buchnera sp. APS.</title>
        <authorList>
            <person name="Shigenobu S."/>
            <person name="Watanabe H."/>
            <person name="Hattori M."/>
            <person name="Sakaki Y."/>
            <person name="Ishikawa H."/>
        </authorList>
    </citation>
    <scope>NUCLEOTIDE SEQUENCE [LARGE SCALE GENOMIC DNA]</scope>
    <source>
        <strain>APS</strain>
    </source>
</reference>
<feature type="chain" id="PRO_0000139428" description="Uncharacterized protein BU052">
    <location>
        <begin position="1"/>
        <end position="144"/>
    </location>
</feature>
<feature type="domain" description="Rhodanese" evidence="1">
    <location>
        <begin position="50"/>
        <end position="140"/>
    </location>
</feature>
<proteinExistence type="predicted"/>
<keyword id="KW-1185">Reference proteome</keyword>
<dbReference type="EMBL" id="BA000003">
    <property type="protein sequence ID" value="BAB12775.1"/>
    <property type="molecule type" value="Genomic_DNA"/>
</dbReference>
<dbReference type="RefSeq" id="NP_239889.1">
    <property type="nucleotide sequence ID" value="NC_002528.1"/>
</dbReference>
<dbReference type="RefSeq" id="WP_010895919.1">
    <property type="nucleotide sequence ID" value="NC_002528.1"/>
</dbReference>
<dbReference type="SMR" id="P57160"/>
<dbReference type="STRING" id="563178.BUAP5A_051"/>
<dbReference type="EnsemblBacteria" id="BAB12775">
    <property type="protein sequence ID" value="BAB12775"/>
    <property type="gene ID" value="BAB12775"/>
</dbReference>
<dbReference type="KEGG" id="buc:BU052"/>
<dbReference type="PATRIC" id="fig|107806.10.peg.61"/>
<dbReference type="eggNOG" id="COG0607">
    <property type="taxonomic scope" value="Bacteria"/>
</dbReference>
<dbReference type="HOGENOM" id="CLU_089574_1_5_6"/>
<dbReference type="BioCyc" id="BAPH107806:GBZJ-52-MONOMER"/>
<dbReference type="Proteomes" id="UP000001806">
    <property type="component" value="Chromosome"/>
</dbReference>
<dbReference type="CDD" id="cd00158">
    <property type="entry name" value="RHOD"/>
    <property type="match status" value="1"/>
</dbReference>
<dbReference type="Gene3D" id="3.40.250.10">
    <property type="entry name" value="Rhodanese-like domain"/>
    <property type="match status" value="1"/>
</dbReference>
<dbReference type="InterPro" id="IPR001763">
    <property type="entry name" value="Rhodanese-like_dom"/>
</dbReference>
<dbReference type="InterPro" id="IPR036873">
    <property type="entry name" value="Rhodanese-like_dom_sf"/>
</dbReference>
<dbReference type="Pfam" id="PF00581">
    <property type="entry name" value="Rhodanese"/>
    <property type="match status" value="1"/>
</dbReference>
<dbReference type="SMART" id="SM00450">
    <property type="entry name" value="RHOD"/>
    <property type="match status" value="1"/>
</dbReference>
<dbReference type="SUPFAM" id="SSF52821">
    <property type="entry name" value="Rhodanese/Cell cycle control phosphatase"/>
    <property type="match status" value="1"/>
</dbReference>
<dbReference type="PROSITE" id="PS50206">
    <property type="entry name" value="RHODANESE_3"/>
    <property type="match status" value="1"/>
</dbReference>
<organism>
    <name type="scientific">Buchnera aphidicola subsp. Acyrthosiphon pisum (strain APS)</name>
    <name type="common">Acyrthosiphon pisum symbiotic bacterium</name>
    <dbReference type="NCBI Taxonomy" id="107806"/>
    <lineage>
        <taxon>Bacteria</taxon>
        <taxon>Pseudomonadati</taxon>
        <taxon>Pseudomonadota</taxon>
        <taxon>Gammaproteobacteria</taxon>
        <taxon>Enterobacterales</taxon>
        <taxon>Erwiniaceae</taxon>
        <taxon>Buchnera</taxon>
    </lineage>
</organism>
<evidence type="ECO:0000255" key="1">
    <source>
        <dbReference type="PROSITE-ProRule" id="PRU00173"/>
    </source>
</evidence>
<name>Y052_BUCAI</name>
<accession>P57160</accession>
<sequence length="144" mass="16921">MQDVIFFLSKHILLISIWIFCFIAAVFFITRTLLSKSKMINNFQAIKLINQDKAIVVDTRSLESFKEGHILNSINVPLKNIFLGKIKEIEIYKMFPIILVLSDTYKVNACIKKFFEYGFNRVYILKNGLYYWKTDNLPLIVNDK</sequence>
<protein>
    <recommendedName>
        <fullName>Uncharacterized protein BU052</fullName>
    </recommendedName>
</protein>
<gene>
    <name type="ordered locus">BU052</name>
</gene>